<proteinExistence type="inferred from homology"/>
<gene>
    <name type="primary">MDV028</name>
</gene>
<name>CEP2_GAHVM</name>
<organismHost>
    <name type="scientific">Gallus gallus</name>
    <name type="common">Chicken</name>
    <dbReference type="NCBI Taxonomy" id="9031"/>
</organismHost>
<dbReference type="EMBL" id="AF243438">
    <property type="protein sequence ID" value="AAG14208.1"/>
    <property type="molecule type" value="Genomic_DNA"/>
</dbReference>
<dbReference type="RefSeq" id="YP_001033944.1">
    <property type="nucleotide sequence ID" value="NC_002229.3"/>
</dbReference>
<dbReference type="GeneID" id="4811489"/>
<dbReference type="KEGG" id="vg:4811489"/>
<dbReference type="Proteomes" id="UP000008072">
    <property type="component" value="Segment"/>
</dbReference>
<dbReference type="GO" id="GO:0030430">
    <property type="term" value="C:host cell cytoplasm"/>
    <property type="evidence" value="ECO:0007669"/>
    <property type="project" value="UniProtKB-SubCell"/>
</dbReference>
<dbReference type="GO" id="GO:0042025">
    <property type="term" value="C:host cell nucleus"/>
    <property type="evidence" value="ECO:0007669"/>
    <property type="project" value="UniProtKB-SubCell"/>
</dbReference>
<dbReference type="GO" id="GO:0019033">
    <property type="term" value="C:viral tegument"/>
    <property type="evidence" value="ECO:0007669"/>
    <property type="project" value="UniProtKB-SubCell"/>
</dbReference>
<dbReference type="HAMAP" id="MF_04039">
    <property type="entry name" value="HSV_CEP2"/>
    <property type="match status" value="1"/>
</dbReference>
<dbReference type="InterPro" id="IPR004286">
    <property type="entry name" value="Herpes_UL16/UL94"/>
</dbReference>
<dbReference type="Pfam" id="PF03044">
    <property type="entry name" value="Herpes_UL16"/>
    <property type="match status" value="1"/>
</dbReference>
<keyword id="KW-1035">Host cytoplasm</keyword>
<keyword id="KW-1048">Host nucleus</keyword>
<keyword id="KW-0426">Late protein</keyword>
<keyword id="KW-1185">Reference proteome</keyword>
<keyword id="KW-0946">Virion</keyword>
<keyword id="KW-0920">Virion tegument</keyword>
<reference key="1">
    <citation type="journal article" date="2000" name="J. Virol.">
        <title>The genome of a very virulent Marek's disease virus.</title>
        <authorList>
            <person name="Tulman E.R."/>
            <person name="Afonso C.L."/>
            <person name="Lu Z."/>
            <person name="Zsak L."/>
            <person name="Rock D.L."/>
            <person name="Kutish G.F."/>
        </authorList>
    </citation>
    <scope>NUCLEOTIDE SEQUENCE [LARGE SCALE GENOMIC DNA]</scope>
</reference>
<protein>
    <recommendedName>
        <fullName evidence="1">Cytoplasmic envelopment protein 2</fullName>
    </recommendedName>
</protein>
<organism>
    <name type="scientific">Gallid herpesvirus 2 (strain Chicken/Md5/ATCC VR-987)</name>
    <name type="common">GaHV-2</name>
    <name type="synonym">Marek's disease herpesvirus type 1</name>
    <dbReference type="NCBI Taxonomy" id="10389"/>
    <lineage>
        <taxon>Viruses</taxon>
        <taxon>Duplodnaviria</taxon>
        <taxon>Heunggongvirae</taxon>
        <taxon>Peploviricota</taxon>
        <taxon>Herviviricetes</taxon>
        <taxon>Herpesvirales</taxon>
        <taxon>Orthoherpesviridae</taxon>
        <taxon>Alphaherpesvirinae</taxon>
        <taxon>Mardivirus</taxon>
        <taxon>Mardivirus gallidalpha2</taxon>
        <taxon>Gallid alphaherpesvirus 2</taxon>
    </lineage>
</organism>
<sequence length="360" mass="41311">MTTQRLKIPRSTRHQHSGRDCDGMDIEFVRRLNERIIIWRTLRAESRLVVMLALIALDSSLCTYVTPNKQPRKAKWVEIFMYLTRPKNLYLSRKEFHILFLANGTRAYSVTATLRIHPILHEGSSADVIFFSNVSSTEAYAIIPDVTSEFLPTTPCIELDIDVFVERTQPPDDPHNCIPISIGVWWSFSKRRFYYLRMEESLLAICPAGWQQRSLSATLAKFINHESGCRECREHCDLHIDAYNVLWECGSFGHTCLCRGPCMWIKARQRDLLVEGDKSLGCVLFMDMVNSVRLITNPSTETRITERLEDVIVAGVGYSNIPVNSCGWHLVCLPEIWSAIMIQGCIRLTRLCNDRQPNVV</sequence>
<comment type="function">
    <text evidence="1">Plays a critical role in cytoplasmic virus egress. Participates in the final step of tegumentation and envelope acquisition within the host cytoplasm by directly interacting with the capsid. Upon virion binding to target cell, a signaling cascade is triggered to disrupt the interaction with the capsid, thereby preparing capsid uncoating.</text>
</comment>
<comment type="subunit">
    <text evidence="1">Interacts with cytoplasmic envelopment protein 3 and with the capsid.</text>
</comment>
<comment type="subcellular location">
    <subcellularLocation>
        <location evidence="1">Virion tegument</location>
    </subcellularLocation>
    <subcellularLocation>
        <location evidence="1">Host cytoplasm</location>
    </subcellularLocation>
    <subcellularLocation>
        <location evidence="1">Host nucleus</location>
    </subcellularLocation>
    <text evidence="1">Localizes in the host nucleus up to 18 hours postinfection, but at later times localizes to punctate, cytoplasmic structures.</text>
</comment>
<comment type="similarity">
    <text evidence="1">Belongs to the herpesviridae cytoplasmic envelopment protein 2 family.</text>
</comment>
<feature type="chain" id="PRO_0000406560" description="Cytoplasmic envelopment protein 2">
    <location>
        <begin position="1"/>
        <end position="360"/>
    </location>
</feature>
<evidence type="ECO:0000255" key="1">
    <source>
        <dbReference type="HAMAP-Rule" id="MF_04039"/>
    </source>
</evidence>
<accession>Q9E6Q1</accession>